<accession>O96570</accession>
<keyword id="KW-0963">Cytoplasm</keyword>
<keyword id="KW-1185">Reference proteome</keyword>
<reference evidence="3" key="1">
    <citation type="journal article" date="1999" name="Gene">
        <title>A compact gene cluster in Drosophila: the unrelated Cs gene is compressed between duplicated amd and Ddc.</title>
        <authorList>
            <person name="Tatarenkov A."/>
            <person name="Saez A.G."/>
            <person name="Ayala F.J."/>
        </authorList>
    </citation>
    <scope>NUCLEOTIDE SEQUENCE [GENOMIC DNA]</scope>
    <source>
        <strain evidence="2">Beirut</strain>
    </source>
</reference>
<dbReference type="EMBL" id="AF091329">
    <property type="protein sequence ID" value="AAC67584.1"/>
    <property type="molecule type" value="Genomic_DNA"/>
</dbReference>
<dbReference type="SMR" id="O96570"/>
<dbReference type="OrthoDB" id="2219495at2759"/>
<dbReference type="Proteomes" id="UP000504634">
    <property type="component" value="Unplaced"/>
</dbReference>
<dbReference type="GO" id="GO:0005737">
    <property type="term" value="C:cytoplasm"/>
    <property type="evidence" value="ECO:0000250"/>
    <property type="project" value="UniProtKB"/>
</dbReference>
<dbReference type="GO" id="GO:0046592">
    <property type="term" value="F:polyamine oxidase activity"/>
    <property type="evidence" value="ECO:0007669"/>
    <property type="project" value="TreeGrafter"/>
</dbReference>
<dbReference type="Gene3D" id="3.90.660.10">
    <property type="match status" value="1"/>
</dbReference>
<dbReference type="Gene3D" id="3.50.50.60">
    <property type="entry name" value="FAD/NAD(P)-binding domain"/>
    <property type="match status" value="1"/>
</dbReference>
<dbReference type="InterPro" id="IPR002937">
    <property type="entry name" value="Amino_oxidase"/>
</dbReference>
<dbReference type="InterPro" id="IPR036188">
    <property type="entry name" value="FAD/NAD-bd_sf"/>
</dbReference>
<dbReference type="InterPro" id="IPR050281">
    <property type="entry name" value="Flavin_monoamine_oxidase"/>
</dbReference>
<dbReference type="PANTHER" id="PTHR10742:SF398">
    <property type="entry name" value="AMINE OXIDASE DOMAIN-CONTAINING PROTEIN-RELATED"/>
    <property type="match status" value="1"/>
</dbReference>
<dbReference type="PANTHER" id="PTHR10742">
    <property type="entry name" value="FLAVIN MONOAMINE OXIDASE"/>
    <property type="match status" value="1"/>
</dbReference>
<dbReference type="Pfam" id="PF01593">
    <property type="entry name" value="Amino_oxidase"/>
    <property type="match status" value="1"/>
</dbReference>
<dbReference type="SUPFAM" id="SSF54373">
    <property type="entry name" value="FAD-linked reductases, C-terminal domain"/>
    <property type="match status" value="1"/>
</dbReference>
<dbReference type="SUPFAM" id="SSF51905">
    <property type="entry name" value="FAD/NAD(P)-binding domain"/>
    <property type="match status" value="1"/>
</dbReference>
<name>A37C_DROLE</name>
<protein>
    <recommendedName>
        <fullName>Protein anon-37Cs</fullName>
    </recommendedName>
</protein>
<sequence length="544" mass="61027">MVHPQLKRSIESLSFSGYKLTRRNLYNAPALKVMGRSVNNSSSNNNDQQQYNLESAKQNTQIVVIGAGLAGLSAAQHLLRHGFRSTIVLEATDRYGGRVNSKRFGDTYCELGAKWVNMNIDGAHNTIYELLRNAEGLRKQLKQRECANYVHTQGREVPPNMVELIDMQFRQLCRGFKVSEKVKSGGDLHVLDNVMAYFKTESEKLVGHSYPDPEKRALAREIFQSLFKEFSSILGCCLEYVNIEHITSCPVQQELRPLYVPTGLDNVLDTLTQHISKEQLQTGKPVGSIQWQTLSDFGAPTSPLPQERKCVACLDGTLYSADHIICTLPLGVLKNFSAILFKPALPLEKLQAIRNLGYGNPVKIYLAYKRPISRWLKSNLRPLGAQLGKDEPAITVNGRQERLWTQQVVEISQLPSSQHVLEIRVGGGYYDEIEKLPDVTLLEQITALLRQCLRNRLVPYPQALLRSNWSTSACYLGGRPYFSTTSSARDVQRLAEPLGDIAPTLLFAGDATALKGFGTIDGARTSGIREAQRIIDYYYLKQYM</sequence>
<evidence type="ECO:0000250" key="1"/>
<evidence type="ECO:0000269" key="2">
    <source>
    </source>
</evidence>
<evidence type="ECO:0000305" key="3"/>
<organism>
    <name type="scientific">Drosophila lebanonensis</name>
    <name type="common">Fruit fly</name>
    <name type="synonym">Scaptodrosophila lebanonensis</name>
    <dbReference type="NCBI Taxonomy" id="7225"/>
    <lineage>
        <taxon>Eukaryota</taxon>
        <taxon>Metazoa</taxon>
        <taxon>Ecdysozoa</taxon>
        <taxon>Arthropoda</taxon>
        <taxon>Hexapoda</taxon>
        <taxon>Insecta</taxon>
        <taxon>Pterygota</taxon>
        <taxon>Neoptera</taxon>
        <taxon>Endopterygota</taxon>
        <taxon>Diptera</taxon>
        <taxon>Brachycera</taxon>
        <taxon>Muscomorpha</taxon>
        <taxon>Ephydroidea</taxon>
        <taxon>Drosophilidae</taxon>
        <taxon>Scaptodrosophila</taxon>
    </lineage>
</organism>
<proteinExistence type="inferred from homology"/>
<feature type="chain" id="PRO_0000064403" description="Protein anon-37Cs">
    <location>
        <begin position="1"/>
        <end position="544"/>
    </location>
</feature>
<comment type="function">
    <text evidence="1">Has a non-vital function.</text>
</comment>
<comment type="subcellular location">
    <subcellularLocation>
        <location evidence="1">Cytoplasm</location>
    </subcellularLocation>
</comment>
<gene>
    <name type="primary">anon-37Cs</name>
    <name type="synonym">Cs</name>
    <name type="ORF">CG10561</name>
</gene>